<organism>
    <name type="scientific">Protochlamydia amoebophila (strain UWE25)</name>
    <dbReference type="NCBI Taxonomy" id="264201"/>
    <lineage>
        <taxon>Bacteria</taxon>
        <taxon>Pseudomonadati</taxon>
        <taxon>Chlamydiota</taxon>
        <taxon>Chlamydiia</taxon>
        <taxon>Parachlamydiales</taxon>
        <taxon>Parachlamydiaceae</taxon>
        <taxon>Candidatus Protochlamydia</taxon>
    </lineage>
</organism>
<reference key="1">
    <citation type="journal article" date="2004" name="Science">
        <title>Illuminating the evolutionary history of chlamydiae.</title>
        <authorList>
            <person name="Horn M."/>
            <person name="Collingro A."/>
            <person name="Schmitz-Esser S."/>
            <person name="Beier C.L."/>
            <person name="Purkhold U."/>
            <person name="Fartmann B."/>
            <person name="Brandt P."/>
            <person name="Nyakatura G.J."/>
            <person name="Droege M."/>
            <person name="Frishman D."/>
            <person name="Rattei T."/>
            <person name="Mewes H.-W."/>
            <person name="Wagner M."/>
        </authorList>
    </citation>
    <scope>NUCLEOTIDE SEQUENCE [LARGE SCALE GENOMIC DNA]</scope>
    <source>
        <strain>UWE25</strain>
    </source>
</reference>
<keyword id="KW-0963">Cytoplasm</keyword>
<keyword id="KW-0460">Magnesium</keyword>
<keyword id="KW-0479">Metal-binding</keyword>
<keyword id="KW-0548">Nucleotidyltransferase</keyword>
<keyword id="KW-1185">Reference proteome</keyword>
<keyword id="KW-0694">RNA-binding</keyword>
<keyword id="KW-0808">Transferase</keyword>
<feature type="chain" id="PRO_0000329775" description="Polyribonucleotide nucleotidyltransferase">
    <location>
        <begin position="1"/>
        <end position="697"/>
    </location>
</feature>
<feature type="domain" description="KH" evidence="1">
    <location>
        <begin position="554"/>
        <end position="613"/>
    </location>
</feature>
<feature type="domain" description="S1 motif" evidence="1">
    <location>
        <begin position="623"/>
        <end position="691"/>
    </location>
</feature>
<feature type="binding site" evidence="1">
    <location>
        <position position="487"/>
    </location>
    <ligand>
        <name>Mg(2+)</name>
        <dbReference type="ChEBI" id="CHEBI:18420"/>
    </ligand>
</feature>
<feature type="binding site" evidence="1">
    <location>
        <position position="493"/>
    </location>
    <ligand>
        <name>Mg(2+)</name>
        <dbReference type="ChEBI" id="CHEBI:18420"/>
    </ligand>
</feature>
<name>PNP_PARUW</name>
<comment type="function">
    <text evidence="1">Involved in mRNA degradation. Catalyzes the phosphorolysis of single-stranded polyribonucleotides processively in the 3'- to 5'-direction.</text>
</comment>
<comment type="catalytic activity">
    <reaction evidence="1">
        <text>RNA(n+1) + phosphate = RNA(n) + a ribonucleoside 5'-diphosphate</text>
        <dbReference type="Rhea" id="RHEA:22096"/>
        <dbReference type="Rhea" id="RHEA-COMP:14527"/>
        <dbReference type="Rhea" id="RHEA-COMP:17342"/>
        <dbReference type="ChEBI" id="CHEBI:43474"/>
        <dbReference type="ChEBI" id="CHEBI:57930"/>
        <dbReference type="ChEBI" id="CHEBI:140395"/>
        <dbReference type="EC" id="2.7.7.8"/>
    </reaction>
</comment>
<comment type="cofactor">
    <cofactor evidence="1">
        <name>Mg(2+)</name>
        <dbReference type="ChEBI" id="CHEBI:18420"/>
    </cofactor>
</comment>
<comment type="subcellular location">
    <subcellularLocation>
        <location evidence="1">Cytoplasm</location>
    </subcellularLocation>
</comment>
<comment type="similarity">
    <text evidence="1">Belongs to the polyribonucleotide nucleotidyltransferase family.</text>
</comment>
<comment type="sequence caution" evidence="2">
    <conflict type="erroneous initiation">
        <sequence resource="EMBL-CDS" id="CAF23367"/>
    </conflict>
</comment>
<sequence>MQRETISVPVGAQEIIFETGKIARQAGGAVVVRCGETVVFTTACAAPNADSTTDFLPLRVDYQEKFSSAGKTLGGFIKREGRPTEKEVLVSRLIDRPIRPMFEEGYYNEVQLLSFVWSYDGINSPEPLAICGASAALVISDIPLIKPVGAVRIGFIDAQFIVNPTIEQQKQSKLDLLIAGTEEAVLMIEGFCDFLTEDQVLEAIEIGHRSIKTICQTLEQWRAKVGKPKNRETLRQLPKELYADVESIANPLLEKALRICEKQKREEALAEVTKAVNDRLMPENEEPKYPAKHIAYVIKDVSSKMMRQMILNENVRSDGRTSTDIRFIDIEQSLLPRAHGSSLFTRGETQALAVCTLGGASMAQRFEDLEGEGNNRFYLQYSFPPYSVGEVGRVGAPGRREIGHGKLAERALMAVIPTKEQFPYTIRLESNITESNGSSSMATVCGGCLALMDAGVAIKRPVAGIAMGLILENERFIILSDILGIEDALGDMDFKVTGDQNGITAFQMDIKVEGITIEIMRVALKQAKEGRVHILNKMLAVCPTYKGEMSRYAPRIETIQIKPSKIAVVIGPGGKQIRAIIEQTGVQIDIDDTGLVNIAAIDLVSIEKAKAIIHGLTAEIEIGRIYSGKAISIAPFGVFVEILPGKEGLCHISEFDVNRINSLDEFVKQGDMLMVKVLDINERGQIKLSRKATLQSQ</sequence>
<protein>
    <recommendedName>
        <fullName evidence="1">Polyribonucleotide nucleotidyltransferase</fullName>
        <ecNumber evidence="1">2.7.7.8</ecNumber>
    </recommendedName>
    <alternativeName>
        <fullName evidence="1">Polynucleotide phosphorylase</fullName>
        <shortName evidence="1">PNPase</shortName>
    </alternativeName>
</protein>
<evidence type="ECO:0000255" key="1">
    <source>
        <dbReference type="HAMAP-Rule" id="MF_01595"/>
    </source>
</evidence>
<evidence type="ECO:0000305" key="2"/>
<gene>
    <name evidence="1" type="primary">pnp</name>
    <name type="ordered locus">pc0643</name>
</gene>
<proteinExistence type="inferred from homology"/>
<accession>Q6MDI2</accession>
<dbReference type="EC" id="2.7.7.8" evidence="1"/>
<dbReference type="EMBL" id="BX908798">
    <property type="protein sequence ID" value="CAF23367.1"/>
    <property type="status" value="ALT_INIT"/>
    <property type="molecule type" value="Genomic_DNA"/>
</dbReference>
<dbReference type="RefSeq" id="WP_044044826.1">
    <property type="nucleotide sequence ID" value="NC_005861.2"/>
</dbReference>
<dbReference type="SMR" id="Q6MDI2"/>
<dbReference type="STRING" id="264201.pc0643"/>
<dbReference type="eggNOG" id="COG1185">
    <property type="taxonomic scope" value="Bacteria"/>
</dbReference>
<dbReference type="HOGENOM" id="CLU_004217_2_2_0"/>
<dbReference type="OrthoDB" id="9804305at2"/>
<dbReference type="Proteomes" id="UP000000529">
    <property type="component" value="Chromosome"/>
</dbReference>
<dbReference type="GO" id="GO:0005829">
    <property type="term" value="C:cytosol"/>
    <property type="evidence" value="ECO:0007669"/>
    <property type="project" value="TreeGrafter"/>
</dbReference>
<dbReference type="GO" id="GO:0000175">
    <property type="term" value="F:3'-5'-RNA exonuclease activity"/>
    <property type="evidence" value="ECO:0007669"/>
    <property type="project" value="TreeGrafter"/>
</dbReference>
<dbReference type="GO" id="GO:0000287">
    <property type="term" value="F:magnesium ion binding"/>
    <property type="evidence" value="ECO:0007669"/>
    <property type="project" value="UniProtKB-UniRule"/>
</dbReference>
<dbReference type="GO" id="GO:0004654">
    <property type="term" value="F:polyribonucleotide nucleotidyltransferase activity"/>
    <property type="evidence" value="ECO:0007669"/>
    <property type="project" value="UniProtKB-UniRule"/>
</dbReference>
<dbReference type="GO" id="GO:0003723">
    <property type="term" value="F:RNA binding"/>
    <property type="evidence" value="ECO:0007669"/>
    <property type="project" value="UniProtKB-UniRule"/>
</dbReference>
<dbReference type="GO" id="GO:0006402">
    <property type="term" value="P:mRNA catabolic process"/>
    <property type="evidence" value="ECO:0007669"/>
    <property type="project" value="UniProtKB-UniRule"/>
</dbReference>
<dbReference type="GO" id="GO:0006396">
    <property type="term" value="P:RNA processing"/>
    <property type="evidence" value="ECO:0007669"/>
    <property type="project" value="InterPro"/>
</dbReference>
<dbReference type="CDD" id="cd02393">
    <property type="entry name" value="KH-I_PNPase"/>
    <property type="match status" value="1"/>
</dbReference>
<dbReference type="CDD" id="cd11363">
    <property type="entry name" value="RNase_PH_PNPase_1"/>
    <property type="match status" value="1"/>
</dbReference>
<dbReference type="CDD" id="cd11364">
    <property type="entry name" value="RNase_PH_PNPase_2"/>
    <property type="match status" value="1"/>
</dbReference>
<dbReference type="CDD" id="cd04472">
    <property type="entry name" value="S1_PNPase"/>
    <property type="match status" value="1"/>
</dbReference>
<dbReference type="FunFam" id="3.30.1370.10:FF:000001">
    <property type="entry name" value="Polyribonucleotide nucleotidyltransferase"/>
    <property type="match status" value="1"/>
</dbReference>
<dbReference type="FunFam" id="3.30.230.70:FF:000001">
    <property type="entry name" value="Polyribonucleotide nucleotidyltransferase"/>
    <property type="match status" value="1"/>
</dbReference>
<dbReference type="FunFam" id="3.30.230.70:FF:000002">
    <property type="entry name" value="Polyribonucleotide nucleotidyltransferase"/>
    <property type="match status" value="1"/>
</dbReference>
<dbReference type="FunFam" id="2.40.50.140:FF:000189">
    <property type="entry name" value="Polyribonucleotide nucleotidyltransferase, putative"/>
    <property type="match status" value="1"/>
</dbReference>
<dbReference type="Gene3D" id="3.30.230.70">
    <property type="entry name" value="GHMP Kinase, N-terminal domain"/>
    <property type="match status" value="2"/>
</dbReference>
<dbReference type="Gene3D" id="3.30.1370.10">
    <property type="entry name" value="K Homology domain, type 1"/>
    <property type="match status" value="1"/>
</dbReference>
<dbReference type="Gene3D" id="2.40.50.140">
    <property type="entry name" value="Nucleic acid-binding proteins"/>
    <property type="match status" value="1"/>
</dbReference>
<dbReference type="HAMAP" id="MF_01595">
    <property type="entry name" value="PNPase"/>
    <property type="match status" value="1"/>
</dbReference>
<dbReference type="InterPro" id="IPR001247">
    <property type="entry name" value="ExoRNase_PH_dom1"/>
</dbReference>
<dbReference type="InterPro" id="IPR015847">
    <property type="entry name" value="ExoRNase_PH_dom2"/>
</dbReference>
<dbReference type="InterPro" id="IPR036345">
    <property type="entry name" value="ExoRNase_PH_dom2_sf"/>
</dbReference>
<dbReference type="InterPro" id="IPR004087">
    <property type="entry name" value="KH_dom"/>
</dbReference>
<dbReference type="InterPro" id="IPR004088">
    <property type="entry name" value="KH_dom_type_1"/>
</dbReference>
<dbReference type="InterPro" id="IPR036612">
    <property type="entry name" value="KH_dom_type_1_sf"/>
</dbReference>
<dbReference type="InterPro" id="IPR012340">
    <property type="entry name" value="NA-bd_OB-fold"/>
</dbReference>
<dbReference type="InterPro" id="IPR012162">
    <property type="entry name" value="PNPase"/>
</dbReference>
<dbReference type="InterPro" id="IPR027408">
    <property type="entry name" value="PNPase/RNase_PH_dom_sf"/>
</dbReference>
<dbReference type="InterPro" id="IPR015848">
    <property type="entry name" value="PNPase_PH_RNA-bd_bac/org-type"/>
</dbReference>
<dbReference type="InterPro" id="IPR020568">
    <property type="entry name" value="Ribosomal_Su5_D2-typ_SF"/>
</dbReference>
<dbReference type="InterPro" id="IPR003029">
    <property type="entry name" value="S1_domain"/>
</dbReference>
<dbReference type="NCBIfam" id="TIGR03591">
    <property type="entry name" value="polynuc_phos"/>
    <property type="match status" value="1"/>
</dbReference>
<dbReference type="NCBIfam" id="NF008805">
    <property type="entry name" value="PRK11824.1"/>
    <property type="match status" value="1"/>
</dbReference>
<dbReference type="PANTHER" id="PTHR11252">
    <property type="entry name" value="POLYRIBONUCLEOTIDE NUCLEOTIDYLTRANSFERASE"/>
    <property type="match status" value="1"/>
</dbReference>
<dbReference type="PANTHER" id="PTHR11252:SF0">
    <property type="entry name" value="POLYRIBONUCLEOTIDE NUCLEOTIDYLTRANSFERASE 1, MITOCHONDRIAL"/>
    <property type="match status" value="1"/>
</dbReference>
<dbReference type="Pfam" id="PF00013">
    <property type="entry name" value="KH_1"/>
    <property type="match status" value="1"/>
</dbReference>
<dbReference type="Pfam" id="PF03726">
    <property type="entry name" value="PNPase"/>
    <property type="match status" value="1"/>
</dbReference>
<dbReference type="Pfam" id="PF01138">
    <property type="entry name" value="RNase_PH"/>
    <property type="match status" value="2"/>
</dbReference>
<dbReference type="Pfam" id="PF03725">
    <property type="entry name" value="RNase_PH_C"/>
    <property type="match status" value="2"/>
</dbReference>
<dbReference type="Pfam" id="PF00575">
    <property type="entry name" value="S1"/>
    <property type="match status" value="1"/>
</dbReference>
<dbReference type="PIRSF" id="PIRSF005499">
    <property type="entry name" value="PNPase"/>
    <property type="match status" value="1"/>
</dbReference>
<dbReference type="SMART" id="SM00322">
    <property type="entry name" value="KH"/>
    <property type="match status" value="1"/>
</dbReference>
<dbReference type="SMART" id="SM00316">
    <property type="entry name" value="S1"/>
    <property type="match status" value="1"/>
</dbReference>
<dbReference type="SUPFAM" id="SSF54791">
    <property type="entry name" value="Eukaryotic type KH-domain (KH-domain type I)"/>
    <property type="match status" value="1"/>
</dbReference>
<dbReference type="SUPFAM" id="SSF50249">
    <property type="entry name" value="Nucleic acid-binding proteins"/>
    <property type="match status" value="1"/>
</dbReference>
<dbReference type="SUPFAM" id="SSF55666">
    <property type="entry name" value="Ribonuclease PH domain 2-like"/>
    <property type="match status" value="2"/>
</dbReference>
<dbReference type="SUPFAM" id="SSF54211">
    <property type="entry name" value="Ribosomal protein S5 domain 2-like"/>
    <property type="match status" value="2"/>
</dbReference>
<dbReference type="PROSITE" id="PS50084">
    <property type="entry name" value="KH_TYPE_1"/>
    <property type="match status" value="1"/>
</dbReference>
<dbReference type="PROSITE" id="PS50126">
    <property type="entry name" value="S1"/>
    <property type="match status" value="1"/>
</dbReference>